<accession>A4TIW7</accession>
<evidence type="ECO:0000255" key="1">
    <source>
        <dbReference type="HAMAP-Rule" id="MF_01216"/>
    </source>
</evidence>
<dbReference type="EC" id="1.6.5.-" evidence="1"/>
<dbReference type="EC" id="1.7.1.17" evidence="1"/>
<dbReference type="EMBL" id="CP000668">
    <property type="protein sequence ID" value="ABP39229.1"/>
    <property type="molecule type" value="Genomic_DNA"/>
</dbReference>
<dbReference type="RefSeq" id="WP_002211004.1">
    <property type="nucleotide sequence ID" value="NZ_CP009715.1"/>
</dbReference>
<dbReference type="SMR" id="A4TIW7"/>
<dbReference type="GeneID" id="57976351"/>
<dbReference type="KEGG" id="ypp:YPDSF_0823"/>
<dbReference type="PATRIC" id="fig|386656.14.peg.3037"/>
<dbReference type="GO" id="GO:0009055">
    <property type="term" value="F:electron transfer activity"/>
    <property type="evidence" value="ECO:0007669"/>
    <property type="project" value="UniProtKB-UniRule"/>
</dbReference>
<dbReference type="GO" id="GO:0010181">
    <property type="term" value="F:FMN binding"/>
    <property type="evidence" value="ECO:0007669"/>
    <property type="project" value="UniProtKB-UniRule"/>
</dbReference>
<dbReference type="GO" id="GO:0016652">
    <property type="term" value="F:oxidoreductase activity, acting on NAD(P)H as acceptor"/>
    <property type="evidence" value="ECO:0007669"/>
    <property type="project" value="UniProtKB-UniRule"/>
</dbReference>
<dbReference type="GO" id="GO:0016655">
    <property type="term" value="F:oxidoreductase activity, acting on NAD(P)H, quinone or similar compound as acceptor"/>
    <property type="evidence" value="ECO:0007669"/>
    <property type="project" value="InterPro"/>
</dbReference>
<dbReference type="FunFam" id="3.40.50.360:FF:000010">
    <property type="entry name" value="FMN-dependent NADH-azoreductase"/>
    <property type="match status" value="1"/>
</dbReference>
<dbReference type="Gene3D" id="3.40.50.360">
    <property type="match status" value="1"/>
</dbReference>
<dbReference type="HAMAP" id="MF_01216">
    <property type="entry name" value="Azoreductase_type1"/>
    <property type="match status" value="1"/>
</dbReference>
<dbReference type="InterPro" id="IPR003680">
    <property type="entry name" value="Flavodoxin_fold"/>
</dbReference>
<dbReference type="InterPro" id="IPR029039">
    <property type="entry name" value="Flavoprotein-like_sf"/>
</dbReference>
<dbReference type="InterPro" id="IPR050104">
    <property type="entry name" value="FMN-dep_NADH:Q_OxRdtase_AzoR1"/>
</dbReference>
<dbReference type="InterPro" id="IPR023048">
    <property type="entry name" value="NADH:quinone_OxRdtase_FMN_depd"/>
</dbReference>
<dbReference type="PANTHER" id="PTHR43741">
    <property type="entry name" value="FMN-DEPENDENT NADH-AZOREDUCTASE 1"/>
    <property type="match status" value="1"/>
</dbReference>
<dbReference type="PANTHER" id="PTHR43741:SF2">
    <property type="entry name" value="FMN-DEPENDENT NADH:QUINONE OXIDOREDUCTASE"/>
    <property type="match status" value="1"/>
</dbReference>
<dbReference type="Pfam" id="PF02525">
    <property type="entry name" value="Flavodoxin_2"/>
    <property type="match status" value="1"/>
</dbReference>
<dbReference type="SUPFAM" id="SSF52218">
    <property type="entry name" value="Flavoproteins"/>
    <property type="match status" value="1"/>
</dbReference>
<keyword id="KW-0285">Flavoprotein</keyword>
<keyword id="KW-0288">FMN</keyword>
<keyword id="KW-0520">NAD</keyword>
<keyword id="KW-0560">Oxidoreductase</keyword>
<organism>
    <name type="scientific">Yersinia pestis (strain Pestoides F)</name>
    <dbReference type="NCBI Taxonomy" id="386656"/>
    <lineage>
        <taxon>Bacteria</taxon>
        <taxon>Pseudomonadati</taxon>
        <taxon>Pseudomonadota</taxon>
        <taxon>Gammaproteobacteria</taxon>
        <taxon>Enterobacterales</taxon>
        <taxon>Yersiniaceae</taxon>
        <taxon>Yersinia</taxon>
    </lineage>
</organism>
<reference key="1">
    <citation type="submission" date="2007-02" db="EMBL/GenBank/DDBJ databases">
        <title>Complete sequence of chromosome of Yersinia pestis Pestoides F.</title>
        <authorList>
            <consortium name="US DOE Joint Genome Institute"/>
            <person name="Copeland A."/>
            <person name="Lucas S."/>
            <person name="Lapidus A."/>
            <person name="Barry K."/>
            <person name="Detter J.C."/>
            <person name="Glavina del Rio T."/>
            <person name="Hammon N."/>
            <person name="Israni S."/>
            <person name="Dalin E."/>
            <person name="Tice H."/>
            <person name="Pitluck S."/>
            <person name="Di Bartolo G."/>
            <person name="Chain P."/>
            <person name="Malfatti S."/>
            <person name="Shin M."/>
            <person name="Vergez L."/>
            <person name="Schmutz J."/>
            <person name="Larimer F."/>
            <person name="Land M."/>
            <person name="Hauser L."/>
            <person name="Worsham P."/>
            <person name="Chu M."/>
            <person name="Bearden S."/>
            <person name="Garcia E."/>
            <person name="Richardson P."/>
        </authorList>
    </citation>
    <scope>NUCLEOTIDE SEQUENCE [LARGE SCALE GENOMIC DNA]</scope>
    <source>
        <strain>Pestoides F</strain>
    </source>
</reference>
<sequence length="201" mass="21600">MSKVLVLKSSILATSSQSNQLADFFVEQWQAAHAGDQITVRDLAAQPIPVLDGELVGALRPSGTALTPRQQEALALSDELIAELQANDVIVIAAPMYNFNIPTQLKNYFDMIARAGVTFRYTEKGPEGLVTGKRAIILTSRGGIHKDTPTDLVVPYLRLFLGFIGITDVEFVFAEGIAYGPEVATKAQADAKTLLAQVVAA</sequence>
<proteinExistence type="inferred from homology"/>
<protein>
    <recommendedName>
        <fullName evidence="1">FMN-dependent NADH:quinone oxidoreductase</fullName>
        <ecNumber evidence="1">1.6.5.-</ecNumber>
    </recommendedName>
    <alternativeName>
        <fullName evidence="1">Azo-dye reductase</fullName>
    </alternativeName>
    <alternativeName>
        <fullName evidence="1">FMN-dependent NADH-azo compound oxidoreductase</fullName>
    </alternativeName>
    <alternativeName>
        <fullName evidence="1">FMN-dependent NADH-azoreductase</fullName>
        <ecNumber evidence="1">1.7.1.17</ecNumber>
    </alternativeName>
</protein>
<name>AZOR_YERPP</name>
<comment type="function">
    <text evidence="1">Quinone reductase that provides resistance to thiol-specific stress caused by electrophilic quinones.</text>
</comment>
<comment type="function">
    <text evidence="1">Also exhibits azoreductase activity. Catalyzes the reductive cleavage of the azo bond in aromatic azo compounds to the corresponding amines.</text>
</comment>
<comment type="catalytic activity">
    <reaction evidence="1">
        <text>2 a quinone + NADH + H(+) = 2 a 1,4-benzosemiquinone + NAD(+)</text>
        <dbReference type="Rhea" id="RHEA:65952"/>
        <dbReference type="ChEBI" id="CHEBI:15378"/>
        <dbReference type="ChEBI" id="CHEBI:57540"/>
        <dbReference type="ChEBI" id="CHEBI:57945"/>
        <dbReference type="ChEBI" id="CHEBI:132124"/>
        <dbReference type="ChEBI" id="CHEBI:134225"/>
    </reaction>
</comment>
<comment type="catalytic activity">
    <reaction evidence="1">
        <text>N,N-dimethyl-1,4-phenylenediamine + anthranilate + 2 NAD(+) = 2-(4-dimethylaminophenyl)diazenylbenzoate + 2 NADH + 2 H(+)</text>
        <dbReference type="Rhea" id="RHEA:55872"/>
        <dbReference type="ChEBI" id="CHEBI:15378"/>
        <dbReference type="ChEBI" id="CHEBI:15783"/>
        <dbReference type="ChEBI" id="CHEBI:16567"/>
        <dbReference type="ChEBI" id="CHEBI:57540"/>
        <dbReference type="ChEBI" id="CHEBI:57945"/>
        <dbReference type="ChEBI" id="CHEBI:71579"/>
        <dbReference type="EC" id="1.7.1.17"/>
    </reaction>
</comment>
<comment type="cofactor">
    <cofactor evidence="1">
        <name>FMN</name>
        <dbReference type="ChEBI" id="CHEBI:58210"/>
    </cofactor>
    <text evidence="1">Binds 1 FMN per subunit.</text>
</comment>
<comment type="subunit">
    <text evidence="1">Homodimer.</text>
</comment>
<comment type="similarity">
    <text evidence="1">Belongs to the azoreductase type 1 family.</text>
</comment>
<gene>
    <name evidence="1" type="primary">azoR</name>
    <name type="ordered locus">YPDSF_0823</name>
</gene>
<feature type="chain" id="PRO_1000066538" description="FMN-dependent NADH:quinone oxidoreductase">
    <location>
        <begin position="1"/>
        <end position="201"/>
    </location>
</feature>
<feature type="binding site" evidence="1">
    <location>
        <position position="10"/>
    </location>
    <ligand>
        <name>FMN</name>
        <dbReference type="ChEBI" id="CHEBI:58210"/>
    </ligand>
</feature>
<feature type="binding site" evidence="1">
    <location>
        <begin position="16"/>
        <end position="18"/>
    </location>
    <ligand>
        <name>FMN</name>
        <dbReference type="ChEBI" id="CHEBI:58210"/>
    </ligand>
</feature>
<feature type="binding site" evidence="1">
    <location>
        <begin position="96"/>
        <end position="99"/>
    </location>
    <ligand>
        <name>FMN</name>
        <dbReference type="ChEBI" id="CHEBI:58210"/>
    </ligand>
</feature>
<feature type="binding site" evidence="1">
    <location>
        <begin position="140"/>
        <end position="143"/>
    </location>
    <ligand>
        <name>FMN</name>
        <dbReference type="ChEBI" id="CHEBI:58210"/>
    </ligand>
</feature>